<dbReference type="EC" id="5.6.2.-" evidence="1"/>
<dbReference type="EMBL" id="HE601486">
    <property type="protein sequence ID" value="CAP23316.1"/>
    <property type="molecule type" value="Genomic_DNA"/>
</dbReference>
<dbReference type="SMR" id="A8WS58"/>
<dbReference type="FunCoup" id="A8WS58">
    <property type="interactions" value="2034"/>
</dbReference>
<dbReference type="STRING" id="6238.A8WS58"/>
<dbReference type="EnsemblMetazoa" id="CBG02256.1">
    <property type="protein sequence ID" value="CBG02256.1"/>
    <property type="gene ID" value="WBGene00025337"/>
</dbReference>
<dbReference type="KEGG" id="cbr:CBG_02256"/>
<dbReference type="CTD" id="8581799"/>
<dbReference type="WormBase" id="CBG02256">
    <property type="protein sequence ID" value="CBP14383"/>
    <property type="gene ID" value="WBGene00025337"/>
    <property type="gene designation" value="Cbr-rtel-1"/>
</dbReference>
<dbReference type="eggNOG" id="KOG1132">
    <property type="taxonomic scope" value="Eukaryota"/>
</dbReference>
<dbReference type="HOGENOM" id="CLU_006515_4_0_1"/>
<dbReference type="InParanoid" id="A8WS58"/>
<dbReference type="OMA" id="NCATIVA"/>
<dbReference type="OrthoDB" id="19182at2759"/>
<dbReference type="Proteomes" id="UP000008549">
    <property type="component" value="Unassembled WGS sequence"/>
</dbReference>
<dbReference type="GO" id="GO:0005634">
    <property type="term" value="C:nucleus"/>
    <property type="evidence" value="ECO:0000250"/>
    <property type="project" value="UniProtKB"/>
</dbReference>
<dbReference type="GO" id="GO:0051539">
    <property type="term" value="F:4 iron, 4 sulfur cluster binding"/>
    <property type="evidence" value="ECO:0007669"/>
    <property type="project" value="UniProtKB-UniRule"/>
</dbReference>
<dbReference type="GO" id="GO:0005524">
    <property type="term" value="F:ATP binding"/>
    <property type="evidence" value="ECO:0000250"/>
    <property type="project" value="UniProtKB"/>
</dbReference>
<dbReference type="GO" id="GO:0016887">
    <property type="term" value="F:ATP hydrolysis activity"/>
    <property type="evidence" value="ECO:0007669"/>
    <property type="project" value="RHEA"/>
</dbReference>
<dbReference type="GO" id="GO:0003677">
    <property type="term" value="F:DNA binding"/>
    <property type="evidence" value="ECO:0007669"/>
    <property type="project" value="UniProtKB-UniRule"/>
</dbReference>
<dbReference type="GO" id="GO:0003678">
    <property type="term" value="F:DNA helicase activity"/>
    <property type="evidence" value="ECO:0000250"/>
    <property type="project" value="UniProtKB"/>
</dbReference>
<dbReference type="GO" id="GO:0070182">
    <property type="term" value="F:DNA polymerase binding"/>
    <property type="evidence" value="ECO:0000318"/>
    <property type="project" value="GO_Central"/>
</dbReference>
<dbReference type="GO" id="GO:0046872">
    <property type="term" value="F:metal ion binding"/>
    <property type="evidence" value="ECO:0007669"/>
    <property type="project" value="UniProtKB-UniRule"/>
</dbReference>
<dbReference type="GO" id="GO:0006310">
    <property type="term" value="P:DNA recombination"/>
    <property type="evidence" value="ECO:0007669"/>
    <property type="project" value="InterPro"/>
</dbReference>
<dbReference type="GO" id="GO:0006281">
    <property type="term" value="P:DNA repair"/>
    <property type="evidence" value="ECO:0007669"/>
    <property type="project" value="UniProtKB-UniRule"/>
</dbReference>
<dbReference type="GO" id="GO:0006260">
    <property type="term" value="P:DNA replication"/>
    <property type="evidence" value="ECO:0007669"/>
    <property type="project" value="InterPro"/>
</dbReference>
<dbReference type="GO" id="GO:0045910">
    <property type="term" value="P:negative regulation of DNA recombination"/>
    <property type="evidence" value="ECO:0000318"/>
    <property type="project" value="GO_Central"/>
</dbReference>
<dbReference type="GO" id="GO:1904430">
    <property type="term" value="P:negative regulation of t-circle formation"/>
    <property type="evidence" value="ECO:0000318"/>
    <property type="project" value="GO_Central"/>
</dbReference>
<dbReference type="GO" id="GO:0010569">
    <property type="term" value="P:regulation of double-strand break repair via homologous recombination"/>
    <property type="evidence" value="ECO:0000250"/>
    <property type="project" value="UniProtKB"/>
</dbReference>
<dbReference type="GO" id="GO:0090657">
    <property type="term" value="P:telomeric loop disassembly"/>
    <property type="evidence" value="ECO:0000318"/>
    <property type="project" value="GO_Central"/>
</dbReference>
<dbReference type="CDD" id="cd17970">
    <property type="entry name" value="DEAHc_FancJ"/>
    <property type="match status" value="1"/>
</dbReference>
<dbReference type="CDD" id="cd18788">
    <property type="entry name" value="SF2_C_XPD"/>
    <property type="match status" value="1"/>
</dbReference>
<dbReference type="FunFam" id="3.40.50.300:FF:001352">
    <property type="entry name" value="DNA repair helicase"/>
    <property type="match status" value="1"/>
</dbReference>
<dbReference type="FunFam" id="3.40.50.300:FF:003357">
    <property type="entry name" value="Regulator of telomere elongation helicase 1 homolog"/>
    <property type="match status" value="1"/>
</dbReference>
<dbReference type="Gene3D" id="3.40.50.300">
    <property type="entry name" value="P-loop containing nucleotide triphosphate hydrolases"/>
    <property type="match status" value="2"/>
</dbReference>
<dbReference type="HAMAP" id="MF_03065">
    <property type="entry name" value="RTEL1"/>
    <property type="match status" value="1"/>
</dbReference>
<dbReference type="InterPro" id="IPR006555">
    <property type="entry name" value="ATP-dep_Helicase_C"/>
</dbReference>
<dbReference type="InterPro" id="IPR045028">
    <property type="entry name" value="DinG/Rad3-like"/>
</dbReference>
<dbReference type="InterPro" id="IPR014013">
    <property type="entry name" value="Helic_SF1/SF2_ATP-bd_DinG/Rad3"/>
</dbReference>
<dbReference type="InterPro" id="IPR006554">
    <property type="entry name" value="Helicase-like_DEXD_c2"/>
</dbReference>
<dbReference type="InterPro" id="IPR027417">
    <property type="entry name" value="P-loop_NTPase"/>
</dbReference>
<dbReference type="InterPro" id="IPR010614">
    <property type="entry name" value="RAD3-like_helicase_DEAD"/>
</dbReference>
<dbReference type="InterPro" id="IPR013020">
    <property type="entry name" value="Rad3/Chl1-like"/>
</dbReference>
<dbReference type="InterPro" id="IPR030845">
    <property type="entry name" value="RTEL1"/>
</dbReference>
<dbReference type="NCBIfam" id="TIGR00604">
    <property type="entry name" value="rad3"/>
    <property type="match status" value="1"/>
</dbReference>
<dbReference type="PANTHER" id="PTHR11472">
    <property type="entry name" value="DNA REPAIR DEAD HELICASE RAD3/XP-D SUBFAMILY MEMBER"/>
    <property type="match status" value="1"/>
</dbReference>
<dbReference type="PANTHER" id="PTHR11472:SF34">
    <property type="entry name" value="REGULATOR OF TELOMERE ELONGATION HELICASE 1"/>
    <property type="match status" value="1"/>
</dbReference>
<dbReference type="Pfam" id="PF23109">
    <property type="entry name" value="ARCH_RTEL1"/>
    <property type="match status" value="1"/>
</dbReference>
<dbReference type="Pfam" id="PF06733">
    <property type="entry name" value="DEAD_2"/>
    <property type="match status" value="1"/>
</dbReference>
<dbReference type="Pfam" id="PF13307">
    <property type="entry name" value="Helicase_C_2"/>
    <property type="match status" value="1"/>
</dbReference>
<dbReference type="SMART" id="SM00488">
    <property type="entry name" value="DEXDc2"/>
    <property type="match status" value="1"/>
</dbReference>
<dbReference type="SMART" id="SM00491">
    <property type="entry name" value="HELICc2"/>
    <property type="match status" value="1"/>
</dbReference>
<dbReference type="SUPFAM" id="SSF52540">
    <property type="entry name" value="P-loop containing nucleoside triphosphate hydrolases"/>
    <property type="match status" value="1"/>
</dbReference>
<dbReference type="PROSITE" id="PS00690">
    <property type="entry name" value="DEAH_ATP_HELICASE"/>
    <property type="match status" value="1"/>
</dbReference>
<dbReference type="PROSITE" id="PS51193">
    <property type="entry name" value="HELICASE_ATP_BIND_2"/>
    <property type="match status" value="1"/>
</dbReference>
<organism>
    <name type="scientific">Caenorhabditis briggsae</name>
    <dbReference type="NCBI Taxonomy" id="6238"/>
    <lineage>
        <taxon>Eukaryota</taxon>
        <taxon>Metazoa</taxon>
        <taxon>Ecdysozoa</taxon>
        <taxon>Nematoda</taxon>
        <taxon>Chromadorea</taxon>
        <taxon>Rhabditida</taxon>
        <taxon>Rhabditina</taxon>
        <taxon>Rhabditomorpha</taxon>
        <taxon>Rhabditoidea</taxon>
        <taxon>Rhabditidae</taxon>
        <taxon>Peloderinae</taxon>
        <taxon>Caenorhabditis</taxon>
    </lineage>
</organism>
<reference key="1">
    <citation type="journal article" date="2003" name="PLoS Biol.">
        <title>The genome sequence of Caenorhabditis briggsae: a platform for comparative genomics.</title>
        <authorList>
            <person name="Stein L.D."/>
            <person name="Bao Z."/>
            <person name="Blasiar D."/>
            <person name="Blumenthal T."/>
            <person name="Brent M.R."/>
            <person name="Chen N."/>
            <person name="Chinwalla A."/>
            <person name="Clarke L."/>
            <person name="Clee C."/>
            <person name="Coghlan A."/>
            <person name="Coulson A."/>
            <person name="D'Eustachio P."/>
            <person name="Fitch D.H.A."/>
            <person name="Fulton L.A."/>
            <person name="Fulton R.E."/>
            <person name="Griffiths-Jones S."/>
            <person name="Harris T.W."/>
            <person name="Hillier L.W."/>
            <person name="Kamath R."/>
            <person name="Kuwabara P.E."/>
            <person name="Mardis E.R."/>
            <person name="Marra M.A."/>
            <person name="Miner T.L."/>
            <person name="Minx P."/>
            <person name="Mullikin J.C."/>
            <person name="Plumb R.W."/>
            <person name="Rogers J."/>
            <person name="Schein J.E."/>
            <person name="Sohrmann M."/>
            <person name="Spieth J."/>
            <person name="Stajich J.E."/>
            <person name="Wei C."/>
            <person name="Willey D."/>
            <person name="Wilson R.K."/>
            <person name="Durbin R.M."/>
            <person name="Waterston R.H."/>
        </authorList>
    </citation>
    <scope>NUCLEOTIDE SEQUENCE [LARGE SCALE GENOMIC DNA]</scope>
    <source>
        <strain>AF16</strain>
    </source>
</reference>
<protein>
    <recommendedName>
        <fullName evidence="1">Regulator of telomere elongation helicase 1 homolog</fullName>
        <ecNumber evidence="1">5.6.2.-</ecNumber>
    </recommendedName>
</protein>
<comment type="function">
    <text evidence="1">A probable ATP-dependent DNA helicase implicated in DNA repair and the maintenance of genomic stability. Acts as an anti-recombinase to counteract toxic recombination and limit crossover during meiosis. Regulates meiotic recombination and crossover homeostasis by physically dissociating strand invasion events and thereby promotes noncrossover repair by meiotic synthesis dependent strand annealing (SDSA) as well as disassembly of D loop recombination intermediates.</text>
</comment>
<comment type="catalytic activity">
    <reaction evidence="1">
        <text>ATP + H2O = ADP + phosphate + H(+)</text>
        <dbReference type="Rhea" id="RHEA:13065"/>
        <dbReference type="ChEBI" id="CHEBI:15377"/>
        <dbReference type="ChEBI" id="CHEBI:15378"/>
        <dbReference type="ChEBI" id="CHEBI:30616"/>
        <dbReference type="ChEBI" id="CHEBI:43474"/>
        <dbReference type="ChEBI" id="CHEBI:456216"/>
    </reaction>
</comment>
<comment type="subcellular location">
    <subcellularLocation>
        <location evidence="1">Nucleus</location>
    </subcellularLocation>
</comment>
<comment type="similarity">
    <text evidence="1">Belongs to the helicase family. RAD3/XPD subfamily.</text>
</comment>
<feature type="chain" id="PRO_0000370615" description="Regulator of telomere elongation helicase 1 homolog">
    <location>
        <begin position="1"/>
        <end position="994"/>
    </location>
</feature>
<feature type="domain" description="Helicase ATP-binding" evidence="1">
    <location>
        <begin position="15"/>
        <end position="324"/>
    </location>
</feature>
<feature type="region of interest" description="Disordered" evidence="2">
    <location>
        <begin position="818"/>
        <end position="896"/>
    </location>
</feature>
<feature type="short sequence motif" description="DEAH box">
    <location>
        <begin position="251"/>
        <end position="254"/>
    </location>
</feature>
<feature type="compositionally biased region" description="Basic and acidic residues" evidence="2">
    <location>
        <begin position="818"/>
        <end position="831"/>
    </location>
</feature>
<feature type="compositionally biased region" description="Polar residues" evidence="2">
    <location>
        <begin position="833"/>
        <end position="844"/>
    </location>
</feature>
<feature type="compositionally biased region" description="Basic and acidic residues" evidence="2">
    <location>
        <begin position="847"/>
        <end position="856"/>
    </location>
</feature>
<feature type="compositionally biased region" description="Polar residues" evidence="2">
    <location>
        <begin position="859"/>
        <end position="869"/>
    </location>
</feature>
<feature type="compositionally biased region" description="Polar residues" evidence="2">
    <location>
        <begin position="880"/>
        <end position="889"/>
    </location>
</feature>
<feature type="binding site" evidence="1">
    <location>
        <begin position="50"/>
        <end position="57"/>
    </location>
    <ligand>
        <name>ATP</name>
        <dbReference type="ChEBI" id="CHEBI:30616"/>
    </ligand>
</feature>
<feature type="binding site" evidence="1">
    <location>
        <position position="142"/>
    </location>
    <ligand>
        <name>[4Fe-4S] cluster</name>
        <dbReference type="ChEBI" id="CHEBI:49883"/>
    </ligand>
</feature>
<feature type="binding site" evidence="1">
    <location>
        <position position="160"/>
    </location>
    <ligand>
        <name>[4Fe-4S] cluster</name>
        <dbReference type="ChEBI" id="CHEBI:49883"/>
    </ligand>
</feature>
<feature type="binding site" evidence="1">
    <location>
        <position position="169"/>
    </location>
    <ligand>
        <name>[4Fe-4S] cluster</name>
        <dbReference type="ChEBI" id="CHEBI:49883"/>
    </ligand>
</feature>
<feature type="binding site" evidence="1">
    <location>
        <position position="208"/>
    </location>
    <ligand>
        <name>[4Fe-4S] cluster</name>
        <dbReference type="ChEBI" id="CHEBI:49883"/>
    </ligand>
</feature>
<gene>
    <name evidence="1" type="primary">rtel-1</name>
    <name evidence="1" type="synonym">bch-1</name>
    <name type="ORF">CBG02256</name>
</gene>
<accession>A8WS58</accession>
<keyword id="KW-0004">4Fe-4S</keyword>
<keyword id="KW-0067">ATP-binding</keyword>
<keyword id="KW-0227">DNA damage</keyword>
<keyword id="KW-0234">DNA repair</keyword>
<keyword id="KW-0238">DNA-binding</keyword>
<keyword id="KW-0347">Helicase</keyword>
<keyword id="KW-0378">Hydrolase</keyword>
<keyword id="KW-0408">Iron</keyword>
<keyword id="KW-0411">Iron-sulfur</keyword>
<keyword id="KW-0413">Isomerase</keyword>
<keyword id="KW-0479">Metal-binding</keyword>
<keyword id="KW-0547">Nucleotide-binding</keyword>
<keyword id="KW-0539">Nucleus</keyword>
<keyword id="KW-1185">Reference proteome</keyword>
<sequence>MVSNPSSSTEVWINSKTSIKFPFEPYECQRIFMKNVIDVLDMKLDAALESPTGTGKTLSLLCSTLAWVQKLKESKPMDFATWQSSGAGGAEKTEDKLKNSFIPTIFYASRTHSQLEQVVHELNRTEYKWVKTTILGSREHFCINQKVKKIKESNRQAHVCRGLVSKRSCHYYNKFDALTTDKANEILEKGEAMDIEDFVKIGTQNSICPYFMSRQRSETAELILLPYNYIIDPKMRRRYKLDLKNSIVIFDEAHNLESICESNASAELSSTSIALCIEELKKVLALLVEEEENAREEADNETEAFGTQKIDLTKKLIENLRTEDLMALLEKVFTLEENFDKLFESDQLKSVPPLDGKASDGAILLETLANSGCDGNSVERFVDVLRDAISYLLSKNEEVSLTEKGDGMESVADFLLSIYSTHAQEVAAAVGDEHIKLADRVDPATVARNCKLYIRKDSGKLVIKYFCFQASISMRMLKMRGVRNVLLASGTLSPIQAFTYNMGLNFGAILENEHALKQVPVLTSIVTRGKHGGLVGSFQNRKNIEYVSDVGESLIRVMETTPQGVLVFFSSYSQMDELVEVWKKTKRGASDSPETFWEKMEKTKKIAVEPRAKEQLAAVRLRYTQGVSEPHGAALLAVCRGKVSEGIDFCDAESRAVIIVGIPYPPIHDERVVLKKMYLDDLMGRKDLTNEPQSSRDWYQMEAFRAVNQAIGRVLRHKNDFGTVVLIDTRYASAKPEMFPKWLRNTISRCDSNNCALKTARFFKERGHLIENSKSEYIKKQAKTCKSFRQVKSQSASNPKDDITDITLEDMFSPANMKIEKKEKIEPRPIKYDSSSSSVFSLPTNEDELKVKKWEQENDSQTNVSSSSDLNKRKYKAETPGNSSGQHVVSGSEPPKKRKMVLLTRETLPEKYQNALNIPTSELTKGMSLDNQKQFVATLKGYKATNMEWQEVFQRLHQIFIPDRPDLFISCSNILRSEDKMKYIRRSLGMKINY</sequence>
<name>RTEL1_CAEBR</name>
<proteinExistence type="inferred from homology"/>
<evidence type="ECO:0000255" key="1">
    <source>
        <dbReference type="HAMAP-Rule" id="MF_03065"/>
    </source>
</evidence>
<evidence type="ECO:0000256" key="2">
    <source>
        <dbReference type="SAM" id="MobiDB-lite"/>
    </source>
</evidence>